<dbReference type="EMBL" id="CP000437">
    <property type="protein sequence ID" value="ABI82255.1"/>
    <property type="molecule type" value="Genomic_DNA"/>
</dbReference>
<dbReference type="RefSeq" id="WP_003043247.1">
    <property type="nucleotide sequence ID" value="NC_017463.1"/>
</dbReference>
<dbReference type="SMR" id="Q0BNS9"/>
<dbReference type="GeneID" id="75264263"/>
<dbReference type="KEGG" id="fth:FTH_0229"/>
<dbReference type="GO" id="GO:0005737">
    <property type="term" value="C:cytoplasm"/>
    <property type="evidence" value="ECO:0007669"/>
    <property type="project" value="UniProtKB-SubCell"/>
</dbReference>
<dbReference type="GO" id="GO:0005525">
    <property type="term" value="F:GTP binding"/>
    <property type="evidence" value="ECO:0007669"/>
    <property type="project" value="UniProtKB-UniRule"/>
</dbReference>
<dbReference type="GO" id="GO:0003924">
    <property type="term" value="F:GTPase activity"/>
    <property type="evidence" value="ECO:0007669"/>
    <property type="project" value="InterPro"/>
</dbReference>
<dbReference type="GO" id="GO:0097216">
    <property type="term" value="F:guanosine tetraphosphate binding"/>
    <property type="evidence" value="ECO:0007669"/>
    <property type="project" value="UniProtKB-ARBA"/>
</dbReference>
<dbReference type="GO" id="GO:0003746">
    <property type="term" value="F:translation elongation factor activity"/>
    <property type="evidence" value="ECO:0007669"/>
    <property type="project" value="UniProtKB-UniRule"/>
</dbReference>
<dbReference type="GO" id="GO:0032790">
    <property type="term" value="P:ribosome disassembly"/>
    <property type="evidence" value="ECO:0007669"/>
    <property type="project" value="TreeGrafter"/>
</dbReference>
<dbReference type="CDD" id="cd01886">
    <property type="entry name" value="EF-G"/>
    <property type="match status" value="1"/>
</dbReference>
<dbReference type="CDD" id="cd16262">
    <property type="entry name" value="EFG_III"/>
    <property type="match status" value="1"/>
</dbReference>
<dbReference type="CDD" id="cd01434">
    <property type="entry name" value="EFG_mtEFG1_IV"/>
    <property type="match status" value="1"/>
</dbReference>
<dbReference type="CDD" id="cd03713">
    <property type="entry name" value="EFG_mtEFG_C"/>
    <property type="match status" value="1"/>
</dbReference>
<dbReference type="CDD" id="cd04088">
    <property type="entry name" value="EFG_mtEFG_II"/>
    <property type="match status" value="1"/>
</dbReference>
<dbReference type="FunFam" id="2.40.30.10:FF:000006">
    <property type="entry name" value="Elongation factor G"/>
    <property type="match status" value="1"/>
</dbReference>
<dbReference type="FunFam" id="3.30.230.10:FF:000003">
    <property type="entry name" value="Elongation factor G"/>
    <property type="match status" value="1"/>
</dbReference>
<dbReference type="FunFam" id="3.30.70.240:FF:000001">
    <property type="entry name" value="Elongation factor G"/>
    <property type="match status" value="1"/>
</dbReference>
<dbReference type="FunFam" id="3.30.70.870:FF:000001">
    <property type="entry name" value="Elongation factor G"/>
    <property type="match status" value="1"/>
</dbReference>
<dbReference type="FunFam" id="3.40.50.300:FF:000029">
    <property type="entry name" value="Elongation factor G"/>
    <property type="match status" value="1"/>
</dbReference>
<dbReference type="Gene3D" id="3.30.230.10">
    <property type="match status" value="1"/>
</dbReference>
<dbReference type="Gene3D" id="3.30.70.240">
    <property type="match status" value="1"/>
</dbReference>
<dbReference type="Gene3D" id="3.30.70.870">
    <property type="entry name" value="Elongation Factor G (Translational Gtpase), domain 3"/>
    <property type="match status" value="1"/>
</dbReference>
<dbReference type="Gene3D" id="3.40.50.300">
    <property type="entry name" value="P-loop containing nucleotide triphosphate hydrolases"/>
    <property type="match status" value="1"/>
</dbReference>
<dbReference type="Gene3D" id="2.40.30.10">
    <property type="entry name" value="Translation factors"/>
    <property type="match status" value="1"/>
</dbReference>
<dbReference type="HAMAP" id="MF_00054_B">
    <property type="entry name" value="EF_G_EF_2_B"/>
    <property type="match status" value="1"/>
</dbReference>
<dbReference type="InterPro" id="IPR041095">
    <property type="entry name" value="EFG_II"/>
</dbReference>
<dbReference type="InterPro" id="IPR009022">
    <property type="entry name" value="EFG_III"/>
</dbReference>
<dbReference type="InterPro" id="IPR035647">
    <property type="entry name" value="EFG_III/V"/>
</dbReference>
<dbReference type="InterPro" id="IPR047872">
    <property type="entry name" value="EFG_IV"/>
</dbReference>
<dbReference type="InterPro" id="IPR035649">
    <property type="entry name" value="EFG_V"/>
</dbReference>
<dbReference type="InterPro" id="IPR000640">
    <property type="entry name" value="EFG_V-like"/>
</dbReference>
<dbReference type="InterPro" id="IPR004161">
    <property type="entry name" value="EFTu-like_2"/>
</dbReference>
<dbReference type="InterPro" id="IPR031157">
    <property type="entry name" value="G_TR_CS"/>
</dbReference>
<dbReference type="InterPro" id="IPR027417">
    <property type="entry name" value="P-loop_NTPase"/>
</dbReference>
<dbReference type="InterPro" id="IPR020568">
    <property type="entry name" value="Ribosomal_Su5_D2-typ_SF"/>
</dbReference>
<dbReference type="InterPro" id="IPR014721">
    <property type="entry name" value="Ribsml_uS5_D2-typ_fold_subgr"/>
</dbReference>
<dbReference type="InterPro" id="IPR005225">
    <property type="entry name" value="Small_GTP-bd"/>
</dbReference>
<dbReference type="InterPro" id="IPR000795">
    <property type="entry name" value="T_Tr_GTP-bd_dom"/>
</dbReference>
<dbReference type="InterPro" id="IPR009000">
    <property type="entry name" value="Transl_B-barrel_sf"/>
</dbReference>
<dbReference type="InterPro" id="IPR004540">
    <property type="entry name" value="Transl_elong_EFG/EF2"/>
</dbReference>
<dbReference type="InterPro" id="IPR005517">
    <property type="entry name" value="Transl_elong_EFG/EF2_IV"/>
</dbReference>
<dbReference type="NCBIfam" id="TIGR00484">
    <property type="entry name" value="EF-G"/>
    <property type="match status" value="1"/>
</dbReference>
<dbReference type="NCBIfam" id="NF009381">
    <property type="entry name" value="PRK12740.1-5"/>
    <property type="match status" value="1"/>
</dbReference>
<dbReference type="NCBIfam" id="TIGR00231">
    <property type="entry name" value="small_GTP"/>
    <property type="match status" value="1"/>
</dbReference>
<dbReference type="PANTHER" id="PTHR43261:SF1">
    <property type="entry name" value="RIBOSOME-RELEASING FACTOR 2, MITOCHONDRIAL"/>
    <property type="match status" value="1"/>
</dbReference>
<dbReference type="PANTHER" id="PTHR43261">
    <property type="entry name" value="TRANSLATION ELONGATION FACTOR G-RELATED"/>
    <property type="match status" value="1"/>
</dbReference>
<dbReference type="Pfam" id="PF00679">
    <property type="entry name" value="EFG_C"/>
    <property type="match status" value="1"/>
</dbReference>
<dbReference type="Pfam" id="PF14492">
    <property type="entry name" value="EFG_III"/>
    <property type="match status" value="1"/>
</dbReference>
<dbReference type="Pfam" id="PF03764">
    <property type="entry name" value="EFG_IV"/>
    <property type="match status" value="1"/>
</dbReference>
<dbReference type="Pfam" id="PF00009">
    <property type="entry name" value="GTP_EFTU"/>
    <property type="match status" value="1"/>
</dbReference>
<dbReference type="Pfam" id="PF03144">
    <property type="entry name" value="GTP_EFTU_D2"/>
    <property type="match status" value="1"/>
</dbReference>
<dbReference type="PRINTS" id="PR00315">
    <property type="entry name" value="ELONGATNFCT"/>
</dbReference>
<dbReference type="SMART" id="SM00838">
    <property type="entry name" value="EFG_C"/>
    <property type="match status" value="1"/>
</dbReference>
<dbReference type="SMART" id="SM00889">
    <property type="entry name" value="EFG_IV"/>
    <property type="match status" value="1"/>
</dbReference>
<dbReference type="SUPFAM" id="SSF54980">
    <property type="entry name" value="EF-G C-terminal domain-like"/>
    <property type="match status" value="2"/>
</dbReference>
<dbReference type="SUPFAM" id="SSF52540">
    <property type="entry name" value="P-loop containing nucleoside triphosphate hydrolases"/>
    <property type="match status" value="1"/>
</dbReference>
<dbReference type="SUPFAM" id="SSF54211">
    <property type="entry name" value="Ribosomal protein S5 domain 2-like"/>
    <property type="match status" value="1"/>
</dbReference>
<dbReference type="SUPFAM" id="SSF50447">
    <property type="entry name" value="Translation proteins"/>
    <property type="match status" value="1"/>
</dbReference>
<dbReference type="PROSITE" id="PS00301">
    <property type="entry name" value="G_TR_1"/>
    <property type="match status" value="1"/>
</dbReference>
<dbReference type="PROSITE" id="PS51722">
    <property type="entry name" value="G_TR_2"/>
    <property type="match status" value="1"/>
</dbReference>
<protein>
    <recommendedName>
        <fullName evidence="1">Elongation factor G</fullName>
        <shortName evidence="1">EF-G</shortName>
    </recommendedName>
</protein>
<sequence>MPRNTALEKYRNIGICAHVDAGKTTTTERILFYTGLSHKIGEVHDGAATMDWMEQEQERGITITSAATTTFWSGMDQQFEKHRINIIDTPGHVDFTIEVERSLRVLDGAVVVFCGSSGVEPQSETVWRQANKYGVPRIVFVNKMDRSGADFERVCAQIKTRLKANVVPVQLNIGAEEDFKGVIDLIRMKAIMWNEEDMGLTYELVDIPADLQDRAEELRMEMIEAAAEASEELMEKYLEGGELSEDEIHQGLRARVLNNEIVLAFCGSAFKNKGVQAVLDGVVRYLPAPNQVPAIKCETEDGEPASRPSSDDAPFAALAFKLATDPFVGNLTFIRVYSGVLKSGDAVYNPVKGKKERVGRIVQMHANKRDEIKEVRAGDIAACIGLKDVTTGDTLCDQEDVVILEKMDFPEPVISVAVEPKSKADQEKMSIALGKLAAEDPSFRVKTDEESGQTIISGMGELHLDIIVDRMRREFKVEANVGNPQVAYRETIRSKVEQEAKFVRQSGGRGQYGHVFVRFEPLDEVDENGEAKVFKFVDEVVGGVVPKEYIGSVAKGIEEQLNNGVLAGYPMIGVKATLYDGSYHDVDSSEMAFKIAGSMALKEGAKKANACILEPIMKVEVVTPEDYLGDVMGDLNRRRGIIEGMDENPSGRVINALVPLAEMFGYATNVRSISQGRASFSMEFKKYAEVPNNIADEIIKSRNS</sequence>
<keyword id="KW-0963">Cytoplasm</keyword>
<keyword id="KW-0251">Elongation factor</keyword>
<keyword id="KW-0342">GTP-binding</keyword>
<keyword id="KW-0547">Nucleotide-binding</keyword>
<keyword id="KW-0648">Protein biosynthesis</keyword>
<feature type="chain" id="PRO_0000263451" description="Elongation factor G">
    <location>
        <begin position="1"/>
        <end position="704"/>
    </location>
</feature>
<feature type="domain" description="tr-type G">
    <location>
        <begin position="8"/>
        <end position="290"/>
    </location>
</feature>
<feature type="binding site" evidence="1">
    <location>
        <begin position="17"/>
        <end position="24"/>
    </location>
    <ligand>
        <name>GTP</name>
        <dbReference type="ChEBI" id="CHEBI:37565"/>
    </ligand>
</feature>
<feature type="binding site" evidence="1">
    <location>
        <begin position="88"/>
        <end position="92"/>
    </location>
    <ligand>
        <name>GTP</name>
        <dbReference type="ChEBI" id="CHEBI:37565"/>
    </ligand>
</feature>
<feature type="binding site" evidence="1">
    <location>
        <begin position="142"/>
        <end position="145"/>
    </location>
    <ligand>
        <name>GTP</name>
        <dbReference type="ChEBI" id="CHEBI:37565"/>
    </ligand>
</feature>
<organism>
    <name type="scientific">Francisella tularensis subsp. holarctica (strain OSU18)</name>
    <dbReference type="NCBI Taxonomy" id="393011"/>
    <lineage>
        <taxon>Bacteria</taxon>
        <taxon>Pseudomonadati</taxon>
        <taxon>Pseudomonadota</taxon>
        <taxon>Gammaproteobacteria</taxon>
        <taxon>Thiotrichales</taxon>
        <taxon>Francisellaceae</taxon>
        <taxon>Francisella</taxon>
    </lineage>
</organism>
<proteinExistence type="inferred from homology"/>
<reference key="1">
    <citation type="journal article" date="2006" name="J. Bacteriol.">
        <title>Chromosome rearrangement and diversification of Francisella tularensis revealed by the type B (OSU18) genome sequence.</title>
        <authorList>
            <person name="Petrosino J.F."/>
            <person name="Xiang Q."/>
            <person name="Karpathy S.E."/>
            <person name="Jiang H."/>
            <person name="Yerrapragada S."/>
            <person name="Liu Y."/>
            <person name="Gioia J."/>
            <person name="Hemphill L."/>
            <person name="Gonzalez A."/>
            <person name="Raghavan T.M."/>
            <person name="Uzman A."/>
            <person name="Fox G.E."/>
            <person name="Highlander S."/>
            <person name="Reichard M."/>
            <person name="Morton R.J."/>
            <person name="Clinkenbeard K.D."/>
            <person name="Weinstock G.M."/>
        </authorList>
    </citation>
    <scope>NUCLEOTIDE SEQUENCE [LARGE SCALE GENOMIC DNA]</scope>
    <source>
        <strain>OSU18</strain>
    </source>
</reference>
<name>EFG_FRATO</name>
<evidence type="ECO:0000255" key="1">
    <source>
        <dbReference type="HAMAP-Rule" id="MF_00054"/>
    </source>
</evidence>
<comment type="function">
    <text evidence="1">Catalyzes the GTP-dependent ribosomal translocation step during translation elongation. During this step, the ribosome changes from the pre-translocational (PRE) to the post-translocational (POST) state as the newly formed A-site-bound peptidyl-tRNA and P-site-bound deacylated tRNA move to the P and E sites, respectively. Catalyzes the coordinated movement of the two tRNA molecules, the mRNA and conformational changes in the ribosome.</text>
</comment>
<comment type="subcellular location">
    <subcellularLocation>
        <location evidence="1">Cytoplasm</location>
    </subcellularLocation>
</comment>
<comment type="similarity">
    <text evidence="1">Belongs to the TRAFAC class translation factor GTPase superfamily. Classic translation factor GTPase family. EF-G/EF-2 subfamily.</text>
</comment>
<accession>Q0BNS9</accession>
<gene>
    <name evidence="1" type="primary">fusA</name>
    <name type="ordered locus">FTH_0229</name>
</gene>